<name>APOE_PONPY</name>
<keyword id="KW-0162">Chylomicron</keyword>
<keyword id="KW-0967">Endosome</keyword>
<keyword id="KW-0272">Extracellular matrix</keyword>
<keyword id="KW-0325">Glycoprotein</keyword>
<keyword id="KW-0345">HDL</keyword>
<keyword id="KW-0358">Heparin-binding</keyword>
<keyword id="KW-0445">Lipid transport</keyword>
<keyword id="KW-0446">Lipid-binding</keyword>
<keyword id="KW-0558">Oxidation</keyword>
<keyword id="KW-0597">Phosphoprotein</keyword>
<keyword id="KW-0677">Repeat</keyword>
<keyword id="KW-0964">Secreted</keyword>
<keyword id="KW-0732">Signal</keyword>
<keyword id="KW-0813">Transport</keyword>
<keyword id="KW-0850">VLDL</keyword>
<organism>
    <name type="scientific">Pongo pygmaeus</name>
    <name type="common">Bornean orangutan</name>
    <dbReference type="NCBI Taxonomy" id="9600"/>
    <lineage>
        <taxon>Eukaryota</taxon>
        <taxon>Metazoa</taxon>
        <taxon>Chordata</taxon>
        <taxon>Craniata</taxon>
        <taxon>Vertebrata</taxon>
        <taxon>Euteleostomi</taxon>
        <taxon>Mammalia</taxon>
        <taxon>Eutheria</taxon>
        <taxon>Euarchontoglires</taxon>
        <taxon>Primates</taxon>
        <taxon>Haplorrhini</taxon>
        <taxon>Catarrhini</taxon>
        <taxon>Hominidae</taxon>
        <taxon>Pongo</taxon>
    </lineage>
</organism>
<reference key="1">
    <citation type="submission" date="1999-11" db="EMBL/GenBank/DDBJ databases">
        <title>APOE gene evolution in Hominoidea.</title>
        <authorList>
            <person name="Rogaev E.I."/>
            <person name="Dvorianchikov G.A."/>
            <person name="Riazanskaia N.N."/>
        </authorList>
    </citation>
    <scope>NUCLEOTIDE SEQUENCE [GENOMIC DNA]</scope>
</reference>
<proteinExistence type="inferred from homology"/>
<dbReference type="EMBL" id="AF200505">
    <property type="protein sequence ID" value="AAG28580.1"/>
    <property type="molecule type" value="Genomic_DNA"/>
</dbReference>
<dbReference type="EMBL" id="AF200503">
    <property type="protein sequence ID" value="AAG28580.1"/>
    <property type="status" value="JOINED"/>
    <property type="molecule type" value="Genomic_DNA"/>
</dbReference>
<dbReference type="EMBL" id="AF200504">
    <property type="protein sequence ID" value="AAG28580.1"/>
    <property type="status" value="JOINED"/>
    <property type="molecule type" value="Genomic_DNA"/>
</dbReference>
<dbReference type="SMR" id="Q9GLM7"/>
<dbReference type="GO" id="GO:0042627">
    <property type="term" value="C:chylomicron"/>
    <property type="evidence" value="ECO:0007669"/>
    <property type="project" value="UniProtKB-KW"/>
</dbReference>
<dbReference type="GO" id="GO:0070062">
    <property type="term" value="C:extracellular exosome"/>
    <property type="evidence" value="ECO:0000250"/>
    <property type="project" value="UniProtKB"/>
</dbReference>
<dbReference type="GO" id="GO:0031012">
    <property type="term" value="C:extracellular matrix"/>
    <property type="evidence" value="ECO:0000250"/>
    <property type="project" value="UniProtKB"/>
</dbReference>
<dbReference type="GO" id="GO:0005615">
    <property type="term" value="C:extracellular space"/>
    <property type="evidence" value="ECO:0000250"/>
    <property type="project" value="UniProtKB"/>
</dbReference>
<dbReference type="GO" id="GO:0034364">
    <property type="term" value="C:high-density lipoprotein particle"/>
    <property type="evidence" value="ECO:0000250"/>
    <property type="project" value="UniProtKB"/>
</dbReference>
<dbReference type="GO" id="GO:0034363">
    <property type="term" value="C:intermediate-density lipoprotein particle"/>
    <property type="evidence" value="ECO:0000250"/>
    <property type="project" value="UniProtKB"/>
</dbReference>
<dbReference type="GO" id="GO:0034362">
    <property type="term" value="C:low-density lipoprotein particle"/>
    <property type="evidence" value="ECO:0000250"/>
    <property type="project" value="UniProtKB"/>
</dbReference>
<dbReference type="GO" id="GO:0097487">
    <property type="term" value="C:multivesicular body, internal vesicle"/>
    <property type="evidence" value="ECO:0000250"/>
    <property type="project" value="UniProtKB"/>
</dbReference>
<dbReference type="GO" id="GO:0034361">
    <property type="term" value="C:very-low-density lipoprotein particle"/>
    <property type="evidence" value="ECO:0000250"/>
    <property type="project" value="UniProtKB"/>
</dbReference>
<dbReference type="GO" id="GO:0001540">
    <property type="term" value="F:amyloid-beta binding"/>
    <property type="evidence" value="ECO:0000250"/>
    <property type="project" value="UniProtKB"/>
</dbReference>
<dbReference type="GO" id="GO:0120020">
    <property type="term" value="F:cholesterol transfer activity"/>
    <property type="evidence" value="ECO:0007669"/>
    <property type="project" value="TreeGrafter"/>
</dbReference>
<dbReference type="GO" id="GO:0043395">
    <property type="term" value="F:heparan sulfate proteoglycan binding"/>
    <property type="evidence" value="ECO:0000250"/>
    <property type="project" value="UniProtKB"/>
</dbReference>
<dbReference type="GO" id="GO:0008201">
    <property type="term" value="F:heparin binding"/>
    <property type="evidence" value="ECO:0000250"/>
    <property type="project" value="UniProtKB"/>
</dbReference>
<dbReference type="GO" id="GO:0042802">
    <property type="term" value="F:identical protein binding"/>
    <property type="evidence" value="ECO:0000250"/>
    <property type="project" value="UniProtKB"/>
</dbReference>
<dbReference type="GO" id="GO:0050750">
    <property type="term" value="F:low-density lipoprotein particle receptor binding"/>
    <property type="evidence" value="ECO:0000250"/>
    <property type="project" value="UniProtKB"/>
</dbReference>
<dbReference type="GO" id="GO:0060228">
    <property type="term" value="F:phosphatidylcholine-sterol O-acyltransferase activator activity"/>
    <property type="evidence" value="ECO:0007669"/>
    <property type="project" value="TreeGrafter"/>
</dbReference>
<dbReference type="GO" id="GO:0005543">
    <property type="term" value="F:phospholipid binding"/>
    <property type="evidence" value="ECO:0007669"/>
    <property type="project" value="TreeGrafter"/>
</dbReference>
<dbReference type="GO" id="GO:0055090">
    <property type="term" value="P:acylglycerol homeostasis"/>
    <property type="evidence" value="ECO:0007669"/>
    <property type="project" value="TreeGrafter"/>
</dbReference>
<dbReference type="GO" id="GO:0033344">
    <property type="term" value="P:cholesterol efflux"/>
    <property type="evidence" value="ECO:0000250"/>
    <property type="project" value="UniProtKB"/>
</dbReference>
<dbReference type="GO" id="GO:0008203">
    <property type="term" value="P:cholesterol metabolic process"/>
    <property type="evidence" value="ECO:0007669"/>
    <property type="project" value="TreeGrafter"/>
</dbReference>
<dbReference type="GO" id="GO:0034382">
    <property type="term" value="P:chylomicron remnant clearance"/>
    <property type="evidence" value="ECO:0000250"/>
    <property type="project" value="UniProtKB"/>
</dbReference>
<dbReference type="GO" id="GO:0034380">
    <property type="term" value="P:high-density lipoprotein particle assembly"/>
    <property type="evidence" value="ECO:0000250"/>
    <property type="project" value="UniProtKB"/>
</dbReference>
<dbReference type="GO" id="GO:0071831">
    <property type="term" value="P:intermediate-density lipoprotein particle clearance"/>
    <property type="evidence" value="ECO:0000250"/>
    <property type="project" value="UniProtKB"/>
</dbReference>
<dbReference type="GO" id="GO:0042158">
    <property type="term" value="P:lipoprotein biosynthetic process"/>
    <property type="evidence" value="ECO:0000250"/>
    <property type="project" value="UniProtKB"/>
</dbReference>
<dbReference type="GO" id="GO:0032438">
    <property type="term" value="P:melanosome organization"/>
    <property type="evidence" value="ECO:0000250"/>
    <property type="project" value="UniProtKB"/>
</dbReference>
<dbReference type="GO" id="GO:1905907">
    <property type="term" value="P:negative regulation of amyloid fibril formation"/>
    <property type="evidence" value="ECO:0000250"/>
    <property type="project" value="UniProtKB"/>
</dbReference>
<dbReference type="GO" id="GO:0031175">
    <property type="term" value="P:neuron projection development"/>
    <property type="evidence" value="ECO:0000250"/>
    <property type="project" value="UniProtKB"/>
</dbReference>
<dbReference type="GO" id="GO:0033700">
    <property type="term" value="P:phospholipid efflux"/>
    <property type="evidence" value="ECO:0007669"/>
    <property type="project" value="TreeGrafter"/>
</dbReference>
<dbReference type="GO" id="GO:1900223">
    <property type="term" value="P:positive regulation of amyloid-beta clearance"/>
    <property type="evidence" value="ECO:0000250"/>
    <property type="project" value="UniProtKB"/>
</dbReference>
<dbReference type="GO" id="GO:0071830">
    <property type="term" value="P:triglyceride-rich lipoprotein particle clearance"/>
    <property type="evidence" value="ECO:0000250"/>
    <property type="project" value="UniProtKB"/>
</dbReference>
<dbReference type="GO" id="GO:0034447">
    <property type="term" value="P:very-low-density lipoprotein particle clearance"/>
    <property type="evidence" value="ECO:0000250"/>
    <property type="project" value="UniProtKB"/>
</dbReference>
<dbReference type="FunFam" id="1.20.120.20:FF:000002">
    <property type="entry name" value="Apolipoprotein E"/>
    <property type="match status" value="1"/>
</dbReference>
<dbReference type="FunFam" id="1.20.120.20:FF:000003">
    <property type="entry name" value="Apolipoprotein E"/>
    <property type="match status" value="1"/>
</dbReference>
<dbReference type="Gene3D" id="1.20.120.20">
    <property type="entry name" value="Apolipoprotein"/>
    <property type="match status" value="2"/>
</dbReference>
<dbReference type="InterPro" id="IPR000074">
    <property type="entry name" value="ApoA_E"/>
</dbReference>
<dbReference type="InterPro" id="IPR050163">
    <property type="entry name" value="Apolipoprotein_A1/A4/E"/>
</dbReference>
<dbReference type="PANTHER" id="PTHR18976">
    <property type="entry name" value="APOLIPOPROTEIN"/>
    <property type="match status" value="1"/>
</dbReference>
<dbReference type="PANTHER" id="PTHR18976:SF2">
    <property type="entry name" value="APOLIPOPROTEIN E"/>
    <property type="match status" value="1"/>
</dbReference>
<dbReference type="Pfam" id="PF01442">
    <property type="entry name" value="Apolipoprotein"/>
    <property type="match status" value="1"/>
</dbReference>
<dbReference type="SUPFAM" id="SSF58113">
    <property type="entry name" value="Apolipoprotein A-I"/>
    <property type="match status" value="1"/>
</dbReference>
<protein>
    <recommendedName>
        <fullName>Apolipoprotein E</fullName>
        <shortName>Apo-E</shortName>
    </recommendedName>
</protein>
<accession>Q9GLM7</accession>
<gene>
    <name type="primary">APOE</name>
</gene>
<comment type="function">
    <text evidence="1">APOE is an apolipoprotein, a protein associating with lipid particles, that mainly functions in lipoprotein-mediated lipid transport between organs via the plasma and interstitial fluids. APOE is a core component of plasma lipoproteins and is involved in their production, conversion and clearance. Apolipoproteins are amphipathic molecules that interact both with lipids of the lipoprotein particle core and the aqueous environment of the plasma. As such, APOE associates with chylomicrons, chylomicron remnants, very low density lipoproteins (VLDL) and intermediate density lipoproteins (IDL) but shows a preferential binding to high-density lipoproteins (HDL). It also binds a wide range of cellular receptors including the LDL receptor/LDLR, the LDL receptor-related proteins LRP1, LRP2 and LRP8 and the very low-density lipoprotein receptor/VLDLR that mediate the cellular uptake of the APOE-containing lipoprotein particles. Finally, APOE also has a heparin-binding activity and binds heparan-sulfate proteoglycans on the surface of cells, a property that supports the capture and the receptor-mediated uptake of APOE-containing lipoproteins by cells. A main function of APOE is to mediate lipoprotein clearance through the uptake of chylomicrons, VLDLs, and HDLs by hepatocytes. APOE is also involved in the biosynthesis by the liver of VLDLs as well as their uptake by peripheral tissues ensuring the delivery of triglycerides and energy storage in muscle, heart and adipose tissues. By participating in the lipoprotein-mediated distribution of lipids among tissues, APOE plays a critical role in plasma and tissues lipid homeostasis. APOE is also involved in two steps of reverse cholesterol transport, the HDLs-mediated transport of cholesterol from peripheral tissues to the liver, and thereby plays an important role in cholesterol homeostasis. First, it is functionally associated with ABCA1 in the biogenesis of HDLs in tissues. Second, it is enriched in circulating HDLs and mediates their uptake by hepatocytes. APOE also plays an important role in lipid transport in the central nervous system, regulating neuron survival and sprouting.</text>
</comment>
<comment type="subunit">
    <text evidence="1">Homotetramer. May interact with ABCA1; functionally associated with ABCA1 in the biogenesis of HDLs. May interact with APP/A4 amyloid-beta peptide; the interaction is extremely stable in vitro but its physiological significance is unclear. May interact with MAPT. May interact with MAP2. In the cerebrospinal fluid, interacts with secreted SORL1. Interacts with PMEL; this allows the loading of PMEL luminal fragment on ILVs to induce fibril nucleation.</text>
</comment>
<comment type="subcellular location">
    <subcellularLocation>
        <location evidence="1">Secreted</location>
    </subcellularLocation>
    <subcellularLocation>
        <location evidence="1">Secreted</location>
        <location evidence="1">Extracellular space</location>
    </subcellularLocation>
    <subcellularLocation>
        <location evidence="1">Secreted</location>
        <location evidence="1">Extracellular space</location>
        <location evidence="1">Extracellular matrix</location>
    </subcellularLocation>
    <subcellularLocation>
        <location evidence="1">Extracellular vesicle</location>
    </subcellularLocation>
    <subcellularLocation>
        <location evidence="1">Endosome</location>
        <location evidence="1">Multivesicular body</location>
    </subcellularLocation>
    <text evidence="1">In the plasma, APOE is associated with chylomicrons, chylomicrons remnants, VLDL, LDL and HDL lipoproteins. Lipid poor oligomeric APOE is associated with the extracellular matrix in a calcium- and heparan-sulfate proteoglycans-dependent manner. Lipidation induces the release from the extracellular matrix. Colocalizes with CD63 and PMEL at exosomes and in intraluminal vesicles within multivesicular endosomes.</text>
</comment>
<comment type="PTM">
    <text evidence="1">APOE exists as multiple glycosylated and sialylated glycoforms within cells and in plasma. The extent of glycosylation and sialylation are tissue and context specific.</text>
</comment>
<comment type="PTM">
    <text evidence="1">Glycated in plasma VLDL.</text>
</comment>
<comment type="PTM">
    <text evidence="1">Phosphorylated by FAM20C in the extracellular medium.</text>
</comment>
<comment type="similarity">
    <text evidence="4">Belongs to the apolipoprotein A1/A4/E family.</text>
</comment>
<evidence type="ECO:0000250" key="1">
    <source>
        <dbReference type="UniProtKB" id="P02649"/>
    </source>
</evidence>
<evidence type="ECO:0000250" key="2">
    <source>
        <dbReference type="UniProtKB" id="P08226"/>
    </source>
</evidence>
<evidence type="ECO:0000255" key="3"/>
<evidence type="ECO:0000305" key="4"/>
<sequence>MKVLWAALLVTFLAGCQAKVEQVVETEPEPELRQQAEWQSGQRWELALGRFWDYLRWVQTLSEQVQEELLSSQVTQELTALMDETMKELKAYKSELEEQLTPVAEETRARLSKELQAAQARLGADMEDVRGRLVQYRGEVQAMLGQSTEELRARLASHLRKLRKRLLRDADDLQKRLAVYQAGAREGAERGVSAIRERLGPLVEQGRVRAATVGSVAGKPLQERAQAWGERLRARMEEMGSRTRDRLDEVKEQVAEVRAKLEEQAQQIRLQAEAFQARLKSWFEPLVEDMQRQWAGLVEKVQAAVGTSAAPVPSDNH</sequence>
<feature type="signal peptide" evidence="3">
    <location>
        <begin position="1"/>
        <end position="18"/>
    </location>
</feature>
<feature type="chain" id="PRO_0000001994" description="Apolipoprotein E">
    <location>
        <begin position="19"/>
        <end position="317"/>
    </location>
</feature>
<feature type="repeat" description="1">
    <location>
        <begin position="80"/>
        <end position="101"/>
    </location>
</feature>
<feature type="repeat" description="2">
    <location>
        <begin position="102"/>
        <end position="123"/>
    </location>
</feature>
<feature type="repeat" description="3">
    <location>
        <begin position="124"/>
        <end position="145"/>
    </location>
</feature>
<feature type="repeat" description="4">
    <location>
        <begin position="146"/>
        <end position="167"/>
    </location>
</feature>
<feature type="repeat" description="5">
    <location>
        <begin position="168"/>
        <end position="189"/>
    </location>
</feature>
<feature type="repeat" description="6">
    <location>
        <begin position="190"/>
        <end position="211"/>
    </location>
</feature>
<feature type="repeat" description="7">
    <location>
        <begin position="212"/>
        <end position="233"/>
    </location>
</feature>
<feature type="repeat" description="8">
    <location>
        <begin position="234"/>
        <end position="255"/>
    </location>
</feature>
<feature type="region of interest" description="8 X 22 AA approximate tandem repeats">
    <location>
        <begin position="80"/>
        <end position="255"/>
    </location>
</feature>
<feature type="region of interest" description="LDL and other lipoprotein receptors binding" evidence="1">
    <location>
        <begin position="158"/>
        <end position="168"/>
    </location>
</feature>
<feature type="region of interest" description="Lipid-binding and lipoprotein association" evidence="1">
    <location>
        <begin position="210"/>
        <end position="290"/>
    </location>
</feature>
<feature type="region of interest" description="Homooligomerization" evidence="1">
    <location>
        <begin position="266"/>
        <end position="317"/>
    </location>
</feature>
<feature type="region of interest" description="Specificity for association with VLDL" evidence="1">
    <location>
        <begin position="278"/>
        <end position="290"/>
    </location>
</feature>
<feature type="binding site" evidence="1">
    <location>
        <begin position="162"/>
        <end position="165"/>
    </location>
    <ligand>
        <name>heparin</name>
        <dbReference type="ChEBI" id="CHEBI:28304"/>
    </ligand>
</feature>
<feature type="binding site" evidence="1">
    <location>
        <begin position="229"/>
        <end position="236"/>
    </location>
    <ligand>
        <name>heparin</name>
        <dbReference type="ChEBI" id="CHEBI:28304"/>
    </ligand>
</feature>
<feature type="modified residue" description="Methionine sulfoxide" evidence="2">
    <location>
        <position position="143"/>
    </location>
</feature>
<feature type="modified residue" description="Phosphoserine" evidence="1">
    <location>
        <position position="147"/>
    </location>
</feature>